<sequence length="142" mass="15493">SLSTKDKAVVKGFWSKISGKSDEIGTEAVGRMLTVYPQTKAYFSHWPETTPGSAPVKKHGARILGAINDAVNRIDDMAGALGSLSELHANKLCVDPANFKILAHCLMASICLFYPTDFTPEVHLSVDKFLQNLALALADRYR</sequence>
<name>HBAA_GYMUN</name>
<reference evidence="3" key="1">
    <citation type="journal article" date="2001" name="Eur. J. Biochem.">
        <title>The hemoglobin system of the brown moray Gymnothorax unicolor: structure/function relationships.</title>
        <authorList>
            <person name="Tamburrini M."/>
            <person name="Verde C."/>
            <person name="Olianas A."/>
            <person name="Giardina B."/>
            <person name="Corda M."/>
            <person name="Sanna M.T."/>
            <person name="Fais A."/>
            <person name="Deiana A.M."/>
            <person name="di Prisco G."/>
            <person name="Pellegrini M."/>
        </authorList>
    </citation>
    <scope>PROTEIN SEQUENCE</scope>
    <scope>ACETYLATION AT SER-1</scope>
    <source>
        <tissue evidence="2">Erythrocyte</tissue>
    </source>
</reference>
<evidence type="ECO:0000255" key="1">
    <source>
        <dbReference type="PROSITE-ProRule" id="PRU00238"/>
    </source>
</evidence>
<evidence type="ECO:0000269" key="2">
    <source>
    </source>
</evidence>
<evidence type="ECO:0000305" key="3"/>
<proteinExistence type="evidence at protein level"/>
<keyword id="KW-0007">Acetylation</keyword>
<keyword id="KW-0903">Direct protein sequencing</keyword>
<keyword id="KW-0349">Heme</keyword>
<keyword id="KW-0408">Iron</keyword>
<keyword id="KW-0479">Metal-binding</keyword>
<keyword id="KW-0561">Oxygen transport</keyword>
<keyword id="KW-0813">Transport</keyword>
<comment type="function">
    <text>Involved in oxygen transport from gills to the various peripheral tissues.</text>
</comment>
<comment type="subunit">
    <text evidence="3">Heterotetramer of two alpha chains and two beta chains.</text>
</comment>
<comment type="tissue specificity">
    <text evidence="3">Red blood cells.</text>
</comment>
<comment type="miscellaneous">
    <text>This fish has two hemoglobins: cathodic and anodic. Cathodic Hb has high oxygen affinity, low cooperativity and displays a small reverse Bohr effect. Anodic Hb has low oxygen affinity and cooperativity and displays a normal Bohr effect.</text>
</comment>
<comment type="similarity">
    <text evidence="1">Belongs to the globin family.</text>
</comment>
<feature type="chain" id="PRO_0000052645" description="Hemoglobin anodic subunit alpha">
    <location>
        <begin position="1"/>
        <end position="142"/>
    </location>
</feature>
<feature type="domain" description="Globin" evidence="1">
    <location>
        <begin position="1"/>
        <end position="142"/>
    </location>
</feature>
<feature type="binding site" evidence="1">
    <location>
        <position position="59"/>
    </location>
    <ligand>
        <name>O2</name>
        <dbReference type="ChEBI" id="CHEBI:15379"/>
    </ligand>
</feature>
<feature type="binding site" description="proximal binding residue" evidence="1">
    <location>
        <position position="88"/>
    </location>
    <ligand>
        <name>heme b</name>
        <dbReference type="ChEBI" id="CHEBI:60344"/>
    </ligand>
    <ligandPart>
        <name>Fe</name>
        <dbReference type="ChEBI" id="CHEBI:18248"/>
    </ligandPart>
</feature>
<feature type="modified residue" description="N-acetylserine" evidence="2">
    <location>
        <position position="1"/>
    </location>
</feature>
<organism>
    <name type="scientific">Gymnothorax unicolor</name>
    <name type="common">Brown moray</name>
    <name type="synonym">Muraenophis unicolor</name>
    <dbReference type="NCBI Taxonomy" id="296138"/>
    <lineage>
        <taxon>Eukaryota</taxon>
        <taxon>Metazoa</taxon>
        <taxon>Chordata</taxon>
        <taxon>Craniata</taxon>
        <taxon>Vertebrata</taxon>
        <taxon>Euteleostomi</taxon>
        <taxon>Actinopterygii</taxon>
        <taxon>Neopterygii</taxon>
        <taxon>Teleostei</taxon>
        <taxon>Anguilliformes</taxon>
        <taxon>Muraenidae</taxon>
        <taxon>Gymnothorax</taxon>
    </lineage>
</organism>
<dbReference type="SMR" id="P84205"/>
<dbReference type="iPTMnet" id="P84205"/>
<dbReference type="GO" id="GO:0072562">
    <property type="term" value="C:blood microparticle"/>
    <property type="evidence" value="ECO:0007669"/>
    <property type="project" value="TreeGrafter"/>
</dbReference>
<dbReference type="GO" id="GO:0031838">
    <property type="term" value="C:haptoglobin-hemoglobin complex"/>
    <property type="evidence" value="ECO:0007669"/>
    <property type="project" value="TreeGrafter"/>
</dbReference>
<dbReference type="GO" id="GO:0005833">
    <property type="term" value="C:hemoglobin complex"/>
    <property type="evidence" value="ECO:0007669"/>
    <property type="project" value="InterPro"/>
</dbReference>
<dbReference type="GO" id="GO:0031720">
    <property type="term" value="F:haptoglobin binding"/>
    <property type="evidence" value="ECO:0007669"/>
    <property type="project" value="TreeGrafter"/>
</dbReference>
<dbReference type="GO" id="GO:0020037">
    <property type="term" value="F:heme binding"/>
    <property type="evidence" value="ECO:0007669"/>
    <property type="project" value="InterPro"/>
</dbReference>
<dbReference type="GO" id="GO:0005506">
    <property type="term" value="F:iron ion binding"/>
    <property type="evidence" value="ECO:0007669"/>
    <property type="project" value="InterPro"/>
</dbReference>
<dbReference type="GO" id="GO:0043177">
    <property type="term" value="F:organic acid binding"/>
    <property type="evidence" value="ECO:0007669"/>
    <property type="project" value="TreeGrafter"/>
</dbReference>
<dbReference type="GO" id="GO:0019825">
    <property type="term" value="F:oxygen binding"/>
    <property type="evidence" value="ECO:0007669"/>
    <property type="project" value="InterPro"/>
</dbReference>
<dbReference type="GO" id="GO:0005344">
    <property type="term" value="F:oxygen carrier activity"/>
    <property type="evidence" value="ECO:0007669"/>
    <property type="project" value="UniProtKB-KW"/>
</dbReference>
<dbReference type="GO" id="GO:0004601">
    <property type="term" value="F:peroxidase activity"/>
    <property type="evidence" value="ECO:0007669"/>
    <property type="project" value="TreeGrafter"/>
</dbReference>
<dbReference type="GO" id="GO:0042744">
    <property type="term" value="P:hydrogen peroxide catabolic process"/>
    <property type="evidence" value="ECO:0007669"/>
    <property type="project" value="TreeGrafter"/>
</dbReference>
<dbReference type="CDD" id="cd08927">
    <property type="entry name" value="Hb-alpha-like"/>
    <property type="match status" value="1"/>
</dbReference>
<dbReference type="FunFam" id="1.10.490.10:FF:000002">
    <property type="entry name" value="Hemoglobin subunit alpha"/>
    <property type="match status" value="1"/>
</dbReference>
<dbReference type="Gene3D" id="1.10.490.10">
    <property type="entry name" value="Globins"/>
    <property type="match status" value="1"/>
</dbReference>
<dbReference type="InterPro" id="IPR000971">
    <property type="entry name" value="Globin"/>
</dbReference>
<dbReference type="InterPro" id="IPR009050">
    <property type="entry name" value="Globin-like_sf"/>
</dbReference>
<dbReference type="InterPro" id="IPR012292">
    <property type="entry name" value="Globin/Proto"/>
</dbReference>
<dbReference type="InterPro" id="IPR002338">
    <property type="entry name" value="Hemoglobin_a-typ"/>
</dbReference>
<dbReference type="InterPro" id="IPR050056">
    <property type="entry name" value="Hemoglobin_oxygen_transport"/>
</dbReference>
<dbReference type="InterPro" id="IPR002339">
    <property type="entry name" value="Hemoglobin_pi"/>
</dbReference>
<dbReference type="PANTHER" id="PTHR11442:SF93">
    <property type="entry name" value="ALPHA GLOBIN-LIKE-RELATED"/>
    <property type="match status" value="1"/>
</dbReference>
<dbReference type="PANTHER" id="PTHR11442">
    <property type="entry name" value="HEMOGLOBIN FAMILY MEMBER"/>
    <property type="match status" value="1"/>
</dbReference>
<dbReference type="Pfam" id="PF00042">
    <property type="entry name" value="Globin"/>
    <property type="match status" value="1"/>
</dbReference>
<dbReference type="PRINTS" id="PR00612">
    <property type="entry name" value="ALPHAHAEM"/>
</dbReference>
<dbReference type="PRINTS" id="PR00815">
    <property type="entry name" value="PIHAEM"/>
</dbReference>
<dbReference type="SUPFAM" id="SSF46458">
    <property type="entry name" value="Globin-like"/>
    <property type="match status" value="1"/>
</dbReference>
<dbReference type="PROSITE" id="PS01033">
    <property type="entry name" value="GLOBIN"/>
    <property type="match status" value="1"/>
</dbReference>
<accession>P84205</accession>
<protein>
    <recommendedName>
        <fullName>Hemoglobin anodic subunit alpha</fullName>
    </recommendedName>
    <alternativeName>
        <fullName>Hemoglobin anodic alpha chain</fullName>
    </alternativeName>
</protein>